<organism>
    <name type="scientific">Adiantum capillus-veneris</name>
    <name type="common">Maidenhair fern</name>
    <dbReference type="NCBI Taxonomy" id="13818"/>
    <lineage>
        <taxon>Eukaryota</taxon>
        <taxon>Viridiplantae</taxon>
        <taxon>Streptophyta</taxon>
        <taxon>Embryophyta</taxon>
        <taxon>Tracheophyta</taxon>
        <taxon>Polypodiopsida</taxon>
        <taxon>Polypodiidae</taxon>
        <taxon>Polypodiales</taxon>
        <taxon>Pteridineae</taxon>
        <taxon>Pteridaceae</taxon>
        <taxon>Vittarioideae</taxon>
        <taxon>Adiantum</taxon>
    </lineage>
</organism>
<keyword id="KW-0150">Chloroplast</keyword>
<keyword id="KW-0240">DNA-directed RNA polymerase</keyword>
<keyword id="KW-0460">Magnesium</keyword>
<keyword id="KW-0479">Metal-binding</keyword>
<keyword id="KW-0548">Nucleotidyltransferase</keyword>
<keyword id="KW-0934">Plastid</keyword>
<keyword id="KW-0691">RNA editing</keyword>
<keyword id="KW-0804">Transcription</keyword>
<keyword id="KW-0808">Transferase</keyword>
<keyword id="KW-0862">Zinc</keyword>
<accession>Q85FM8</accession>
<feature type="chain" id="PRO_0000067858" description="DNA-directed RNA polymerase subunit beta'">
    <location>
        <begin position="1"/>
        <end position="694"/>
    </location>
</feature>
<feature type="binding site" evidence="1">
    <location>
        <position position="69"/>
    </location>
    <ligand>
        <name>Zn(2+)</name>
        <dbReference type="ChEBI" id="CHEBI:29105"/>
    </ligand>
</feature>
<feature type="binding site" evidence="1">
    <location>
        <position position="71"/>
    </location>
    <ligand>
        <name>Zn(2+)</name>
        <dbReference type="ChEBI" id="CHEBI:29105"/>
    </ligand>
</feature>
<feature type="binding site" evidence="1">
    <location>
        <position position="87"/>
    </location>
    <ligand>
        <name>Zn(2+)</name>
        <dbReference type="ChEBI" id="CHEBI:29105"/>
    </ligand>
</feature>
<feature type="binding site" evidence="1">
    <location>
        <position position="90"/>
    </location>
    <ligand>
        <name>Zn(2+)</name>
        <dbReference type="ChEBI" id="CHEBI:29105"/>
    </ligand>
</feature>
<feature type="binding site" evidence="1">
    <location>
        <position position="489"/>
    </location>
    <ligand>
        <name>Mg(2+)</name>
        <dbReference type="ChEBI" id="CHEBI:18420"/>
    </ligand>
</feature>
<feature type="binding site" evidence="1">
    <location>
        <position position="491"/>
    </location>
    <ligand>
        <name>Mg(2+)</name>
        <dbReference type="ChEBI" id="CHEBI:18420"/>
    </ligand>
</feature>
<feature type="binding site" evidence="1">
    <location>
        <position position="493"/>
    </location>
    <ligand>
        <name>Mg(2+)</name>
        <dbReference type="ChEBI" id="CHEBI:18420"/>
    </ligand>
</feature>
<dbReference type="EC" id="2.7.7.6" evidence="1"/>
<dbReference type="EMBL" id="AY178864">
    <property type="protein sequence ID" value="AAP29383.2"/>
    <property type="molecule type" value="Genomic_DNA"/>
</dbReference>
<dbReference type="RefSeq" id="NP_848051.1">
    <property type="nucleotide sequence ID" value="NC_004766.1"/>
</dbReference>
<dbReference type="SMR" id="Q85FM8"/>
<dbReference type="GeneID" id="807354"/>
<dbReference type="GO" id="GO:0009507">
    <property type="term" value="C:chloroplast"/>
    <property type="evidence" value="ECO:0007669"/>
    <property type="project" value="UniProtKB-SubCell"/>
</dbReference>
<dbReference type="GO" id="GO:0000428">
    <property type="term" value="C:DNA-directed RNA polymerase complex"/>
    <property type="evidence" value="ECO:0007669"/>
    <property type="project" value="UniProtKB-KW"/>
</dbReference>
<dbReference type="GO" id="GO:0005739">
    <property type="term" value="C:mitochondrion"/>
    <property type="evidence" value="ECO:0007669"/>
    <property type="project" value="GOC"/>
</dbReference>
<dbReference type="GO" id="GO:0003677">
    <property type="term" value="F:DNA binding"/>
    <property type="evidence" value="ECO:0007669"/>
    <property type="project" value="UniProtKB-UniRule"/>
</dbReference>
<dbReference type="GO" id="GO:0003899">
    <property type="term" value="F:DNA-directed RNA polymerase activity"/>
    <property type="evidence" value="ECO:0007669"/>
    <property type="project" value="UniProtKB-UniRule"/>
</dbReference>
<dbReference type="GO" id="GO:0000287">
    <property type="term" value="F:magnesium ion binding"/>
    <property type="evidence" value="ECO:0007669"/>
    <property type="project" value="UniProtKB-UniRule"/>
</dbReference>
<dbReference type="GO" id="GO:0008270">
    <property type="term" value="F:zinc ion binding"/>
    <property type="evidence" value="ECO:0007669"/>
    <property type="project" value="UniProtKB-UniRule"/>
</dbReference>
<dbReference type="GO" id="GO:0006351">
    <property type="term" value="P:DNA-templated transcription"/>
    <property type="evidence" value="ECO:0007669"/>
    <property type="project" value="UniProtKB-UniRule"/>
</dbReference>
<dbReference type="Gene3D" id="1.10.40.90">
    <property type="match status" value="1"/>
</dbReference>
<dbReference type="Gene3D" id="2.40.40.20">
    <property type="match status" value="1"/>
</dbReference>
<dbReference type="Gene3D" id="4.10.860.120">
    <property type="entry name" value="RNA polymerase II, clamp domain"/>
    <property type="match status" value="1"/>
</dbReference>
<dbReference type="Gene3D" id="1.10.274.100">
    <property type="entry name" value="RNA polymerase Rpb1, domain 3"/>
    <property type="match status" value="1"/>
</dbReference>
<dbReference type="HAMAP" id="MF_01323">
    <property type="entry name" value="RNApol_bact_RpoC1"/>
    <property type="match status" value="1"/>
</dbReference>
<dbReference type="InterPro" id="IPR045867">
    <property type="entry name" value="DNA-dir_RpoC_beta_prime"/>
</dbReference>
<dbReference type="InterPro" id="IPR000722">
    <property type="entry name" value="RNA_pol_asu"/>
</dbReference>
<dbReference type="InterPro" id="IPR006592">
    <property type="entry name" value="RNA_pol_N"/>
</dbReference>
<dbReference type="InterPro" id="IPR007080">
    <property type="entry name" value="RNA_pol_Rpb1_1"/>
</dbReference>
<dbReference type="InterPro" id="IPR007066">
    <property type="entry name" value="RNA_pol_Rpb1_3"/>
</dbReference>
<dbReference type="InterPro" id="IPR042102">
    <property type="entry name" value="RNA_pol_Rpb1_3_sf"/>
</dbReference>
<dbReference type="InterPro" id="IPR044893">
    <property type="entry name" value="RNA_pol_Rpb1_clamp_domain"/>
</dbReference>
<dbReference type="InterPro" id="IPR034678">
    <property type="entry name" value="RNApol_RpoC1"/>
</dbReference>
<dbReference type="PANTHER" id="PTHR19376">
    <property type="entry name" value="DNA-DIRECTED RNA POLYMERASE"/>
    <property type="match status" value="1"/>
</dbReference>
<dbReference type="PANTHER" id="PTHR19376:SF54">
    <property type="entry name" value="DNA-DIRECTED RNA POLYMERASE SUBUNIT BETA"/>
    <property type="match status" value="1"/>
</dbReference>
<dbReference type="Pfam" id="PF04997">
    <property type="entry name" value="RNA_pol_Rpb1_1"/>
    <property type="match status" value="1"/>
</dbReference>
<dbReference type="Pfam" id="PF00623">
    <property type="entry name" value="RNA_pol_Rpb1_2"/>
    <property type="match status" value="2"/>
</dbReference>
<dbReference type="Pfam" id="PF04983">
    <property type="entry name" value="RNA_pol_Rpb1_3"/>
    <property type="match status" value="1"/>
</dbReference>
<dbReference type="SMART" id="SM00663">
    <property type="entry name" value="RPOLA_N"/>
    <property type="match status" value="1"/>
</dbReference>
<dbReference type="SUPFAM" id="SSF64484">
    <property type="entry name" value="beta and beta-prime subunits of DNA dependent RNA-polymerase"/>
    <property type="match status" value="1"/>
</dbReference>
<name>RPOC1_ADICA</name>
<gene>
    <name evidence="1" type="primary">rpoC1</name>
</gene>
<geneLocation type="chloroplast"/>
<proteinExistence type="evidence at transcript level"/>
<protein>
    <recommendedName>
        <fullName evidence="1">DNA-directed RNA polymerase subunit beta'</fullName>
        <ecNumber evidence="1">2.7.7.6</ecNumber>
    </recommendedName>
    <alternativeName>
        <fullName evidence="1">PEP</fullName>
    </alternativeName>
    <alternativeName>
        <fullName evidence="1">Plastid-encoded RNA polymerase subunit beta'</fullName>
        <shortName evidence="1">RNA polymerase subunit beta'</shortName>
    </alternativeName>
</protein>
<evidence type="ECO:0000255" key="1">
    <source>
        <dbReference type="HAMAP-Rule" id="MF_01323"/>
    </source>
</evidence>
<evidence type="ECO:0000269" key="2">
    <source>
    </source>
</evidence>
<sequence length="694" mass="79724">MIHRTNYQQLRIGLASPEQIRSWAERELPNGDVIGQVDQPYTLHYKTHKPERDGLFCERIFGPTKSGVCACGNCRSVNDEGESSRFCKHCGVEFTDSRVRRYRMGYIKLACPVTHVWFLKRIPSYIANLLAKPLKELESLVYCDLFLARPVAERPALLRLRGLFNYEDRAWRNILPTFFSTQNYEMLRKNEIVTGGDAIREGLASLDLQSFLNCAYLEWQASVKQKPVGIEWEDRTIRRRKDLLIRRIKLAKDFLRTNMKPEWMVLYFIPVLPPELRPIVELHEGELITSDLNELYRKIIYRNNTLREFLSGSEFTPEGLIVCQKRLVQEAVDALIGSGIRGQPMRDIHNRPYKSFSEVIEGKEGRFRENLLGKRVDYSGRSVIVVGPSLSLHQCGLPREMAIELFQAFVIRNLIGRHLACNLRAAKCMIRKGNPIIWEVLREVMRGHPVLLNRAPTLHRLGIQAFQPLLIEGRAIRLHPLVRGGFNADFDGDQMAVHVPLSVEAQIEARLLMFSHLNLLSPATGDPVSVPSQDMLLGLYALTIESRQGIYRNRHLGFIDRVNVYSTKLLHFSSYCDLLRAKESRQVDSHSLLWLRWKIDLQIISSKIRELSSESHYESSGTSFHFYENCRIRKCRDGSISSMYVLTTAGRILFNQQLKEAMQGVSKNSFSYTTSSTLSTSTIDRCNTNSNNEE</sequence>
<comment type="function">
    <text evidence="1">DNA-dependent RNA polymerase catalyzes the transcription of DNA into RNA using the four ribonucleoside triphosphates as substrates.</text>
</comment>
<comment type="catalytic activity">
    <reaction evidence="1">
        <text>RNA(n) + a ribonucleoside 5'-triphosphate = RNA(n+1) + diphosphate</text>
        <dbReference type="Rhea" id="RHEA:21248"/>
        <dbReference type="Rhea" id="RHEA-COMP:14527"/>
        <dbReference type="Rhea" id="RHEA-COMP:17342"/>
        <dbReference type="ChEBI" id="CHEBI:33019"/>
        <dbReference type="ChEBI" id="CHEBI:61557"/>
        <dbReference type="ChEBI" id="CHEBI:140395"/>
        <dbReference type="EC" id="2.7.7.6"/>
    </reaction>
</comment>
<comment type="cofactor">
    <cofactor evidence="1">
        <name>Mg(2+)</name>
        <dbReference type="ChEBI" id="CHEBI:18420"/>
    </cofactor>
    <text evidence="1">Binds 1 Mg(2+) ion per subunit.</text>
</comment>
<comment type="cofactor">
    <cofactor evidence="1">
        <name>Zn(2+)</name>
        <dbReference type="ChEBI" id="CHEBI:29105"/>
    </cofactor>
    <text evidence="1">Binds 1 Zn(2+) ion per subunit.</text>
</comment>
<comment type="subunit">
    <text evidence="1">In plastids the minimal PEP RNA polymerase catalytic core is composed of four subunits: alpha, beta, beta', and beta''. When a (nuclear-encoded) sigma factor is associated with the core the holoenzyme is formed, which can initiate transcription.</text>
</comment>
<comment type="subcellular location">
    <subcellularLocation>
        <location evidence="1">Plastid</location>
        <location evidence="1">Chloroplast</location>
    </subcellularLocation>
</comment>
<comment type="RNA editing">
    <location>
        <position position="39" evidence="2"/>
    </location>
    <location>
        <position position="43" evidence="2"/>
    </location>
    <location>
        <position position="55" evidence="2"/>
    </location>
    <location>
        <position position="56" evidence="2"/>
    </location>
    <location>
        <position position="140" evidence="2"/>
    </location>
    <location>
        <position position="283" evidence="2"/>
    </location>
    <location>
        <position position="417" evidence="2"/>
    </location>
    <location>
        <position position="486" evidence="2"/>
    </location>
    <location>
        <position position="490" evidence="2"/>
    </location>
    <text>The nonsense codons at positions 39 and 417 are modified to sense codons.</text>
</comment>
<comment type="similarity">
    <text evidence="1">Belongs to the RNA polymerase beta' chain family. RpoC1 subfamily.</text>
</comment>
<reference key="1">
    <citation type="journal article" date="2003" name="DNA Res.">
        <title>Complete nucleotide sequence of the chloroplast genome from a leptosporangiate fern, Adiantum capillus-veneris L.</title>
        <authorList>
            <person name="Wolf P.G."/>
            <person name="Rowe C.A."/>
            <person name="Sinclair R.B."/>
            <person name="Hasebe M."/>
        </authorList>
    </citation>
    <scope>NUCLEOTIDE SEQUENCE [LARGE SCALE GENOMIC DNA]</scope>
</reference>
<reference key="2">
    <citation type="journal article" date="2004" name="Gene">
        <title>High levels of RNA editing in a vascular plant chloroplast genome: analysis of transcripts from the fern Adiantum capillus-veneris.</title>
        <authorList>
            <person name="Wolf P.G."/>
            <person name="Rowe C.A."/>
            <person name="Hasebe M."/>
        </authorList>
    </citation>
    <scope>SEQUENCE REVISION</scope>
    <scope>RNA EDITING</scope>
    <source>
        <tissue>Frond</tissue>
    </source>
</reference>